<evidence type="ECO:0000255" key="1">
    <source>
        <dbReference type="HAMAP-Rule" id="MF_00321"/>
    </source>
</evidence>
<comment type="function">
    <text evidence="1">Necessary for normal cell division and for the maintenance of normal septation.</text>
</comment>
<comment type="cofactor">
    <cofactor evidence="1">
        <name>Mg(2+)</name>
        <dbReference type="ChEBI" id="CHEBI:18420"/>
    </cofactor>
</comment>
<comment type="similarity">
    <text evidence="1">Belongs to the TRAFAC class TrmE-Era-EngA-EngB-Septin-like GTPase superfamily. EngB GTPase family.</text>
</comment>
<accession>A9IXE1</accession>
<reference key="1">
    <citation type="journal article" date="2007" name="Nat. Genet.">
        <title>Genomic analysis of Bartonella identifies type IV secretion systems as host adaptability factors.</title>
        <authorList>
            <person name="Saenz H.L."/>
            <person name="Engel P."/>
            <person name="Stoeckli M.C."/>
            <person name="Lanz C."/>
            <person name="Raddatz G."/>
            <person name="Vayssier-Taussat M."/>
            <person name="Birtles R."/>
            <person name="Schuster S.C."/>
            <person name="Dehio C."/>
        </authorList>
    </citation>
    <scope>NUCLEOTIDE SEQUENCE [LARGE SCALE GENOMIC DNA]</scope>
    <source>
        <strain>CIP 105476 / IBS 506</strain>
    </source>
</reference>
<keyword id="KW-0131">Cell cycle</keyword>
<keyword id="KW-0132">Cell division</keyword>
<keyword id="KW-0342">GTP-binding</keyword>
<keyword id="KW-0460">Magnesium</keyword>
<keyword id="KW-0479">Metal-binding</keyword>
<keyword id="KW-0547">Nucleotide-binding</keyword>
<keyword id="KW-0717">Septation</keyword>
<dbReference type="EMBL" id="AM260525">
    <property type="protein sequence ID" value="CAK02158.1"/>
    <property type="molecule type" value="Genomic_DNA"/>
</dbReference>
<dbReference type="RefSeq" id="WP_012232234.1">
    <property type="nucleotide sequence ID" value="NC_010161.1"/>
</dbReference>
<dbReference type="SMR" id="A9IXE1"/>
<dbReference type="KEGG" id="btr:BT_1890"/>
<dbReference type="eggNOG" id="COG0218">
    <property type="taxonomic scope" value="Bacteria"/>
</dbReference>
<dbReference type="HOGENOM" id="CLU_033732_2_0_5"/>
<dbReference type="Proteomes" id="UP000001592">
    <property type="component" value="Chromosome"/>
</dbReference>
<dbReference type="GO" id="GO:0005829">
    <property type="term" value="C:cytosol"/>
    <property type="evidence" value="ECO:0007669"/>
    <property type="project" value="TreeGrafter"/>
</dbReference>
<dbReference type="GO" id="GO:0005525">
    <property type="term" value="F:GTP binding"/>
    <property type="evidence" value="ECO:0007669"/>
    <property type="project" value="UniProtKB-UniRule"/>
</dbReference>
<dbReference type="GO" id="GO:0046872">
    <property type="term" value="F:metal ion binding"/>
    <property type="evidence" value="ECO:0007669"/>
    <property type="project" value="UniProtKB-KW"/>
</dbReference>
<dbReference type="GO" id="GO:0000917">
    <property type="term" value="P:division septum assembly"/>
    <property type="evidence" value="ECO:0007669"/>
    <property type="project" value="UniProtKB-KW"/>
</dbReference>
<dbReference type="CDD" id="cd01876">
    <property type="entry name" value="YihA_EngB"/>
    <property type="match status" value="1"/>
</dbReference>
<dbReference type="Gene3D" id="3.40.50.300">
    <property type="entry name" value="P-loop containing nucleotide triphosphate hydrolases"/>
    <property type="match status" value="1"/>
</dbReference>
<dbReference type="HAMAP" id="MF_00321">
    <property type="entry name" value="GTPase_EngB"/>
    <property type="match status" value="1"/>
</dbReference>
<dbReference type="InterPro" id="IPR030393">
    <property type="entry name" value="G_ENGB_dom"/>
</dbReference>
<dbReference type="InterPro" id="IPR006073">
    <property type="entry name" value="GTP-bd"/>
</dbReference>
<dbReference type="InterPro" id="IPR019987">
    <property type="entry name" value="GTP-bd_ribosome_bio_YsxC"/>
</dbReference>
<dbReference type="InterPro" id="IPR027417">
    <property type="entry name" value="P-loop_NTPase"/>
</dbReference>
<dbReference type="NCBIfam" id="TIGR03598">
    <property type="entry name" value="GTPase_YsxC"/>
    <property type="match status" value="1"/>
</dbReference>
<dbReference type="PANTHER" id="PTHR11649:SF13">
    <property type="entry name" value="ENGB-TYPE G DOMAIN-CONTAINING PROTEIN"/>
    <property type="match status" value="1"/>
</dbReference>
<dbReference type="PANTHER" id="PTHR11649">
    <property type="entry name" value="MSS1/TRME-RELATED GTP-BINDING PROTEIN"/>
    <property type="match status" value="1"/>
</dbReference>
<dbReference type="Pfam" id="PF01926">
    <property type="entry name" value="MMR_HSR1"/>
    <property type="match status" value="1"/>
</dbReference>
<dbReference type="SUPFAM" id="SSF52540">
    <property type="entry name" value="P-loop containing nucleoside triphosphate hydrolases"/>
    <property type="match status" value="1"/>
</dbReference>
<dbReference type="PROSITE" id="PS51706">
    <property type="entry name" value="G_ENGB"/>
    <property type="match status" value="1"/>
</dbReference>
<protein>
    <recommendedName>
        <fullName evidence="1">Probable GTP-binding protein EngB</fullName>
    </recommendedName>
</protein>
<organism>
    <name type="scientific">Bartonella tribocorum (strain CIP 105476 / IBS 506)</name>
    <dbReference type="NCBI Taxonomy" id="382640"/>
    <lineage>
        <taxon>Bacteria</taxon>
        <taxon>Pseudomonadati</taxon>
        <taxon>Pseudomonadota</taxon>
        <taxon>Alphaproteobacteria</taxon>
        <taxon>Hyphomicrobiales</taxon>
        <taxon>Bartonellaceae</taxon>
        <taxon>Bartonella</taxon>
    </lineage>
</organism>
<gene>
    <name evidence="1" type="primary">engB</name>
    <name type="ordered locus">BT_1890</name>
</gene>
<name>ENGB_BART1</name>
<feature type="chain" id="PRO_1000079164" description="Probable GTP-binding protein EngB">
    <location>
        <begin position="1"/>
        <end position="214"/>
    </location>
</feature>
<feature type="domain" description="EngB-type G" evidence="1">
    <location>
        <begin position="31"/>
        <end position="214"/>
    </location>
</feature>
<feature type="binding site" evidence="1">
    <location>
        <begin position="39"/>
        <end position="46"/>
    </location>
    <ligand>
        <name>GTP</name>
        <dbReference type="ChEBI" id="CHEBI:37565"/>
    </ligand>
</feature>
<feature type="binding site" evidence="1">
    <location>
        <position position="46"/>
    </location>
    <ligand>
        <name>Mg(2+)</name>
        <dbReference type="ChEBI" id="CHEBI:18420"/>
    </ligand>
</feature>
<feature type="binding site" evidence="1">
    <location>
        <begin position="66"/>
        <end position="70"/>
    </location>
    <ligand>
        <name>GTP</name>
        <dbReference type="ChEBI" id="CHEBI:37565"/>
    </ligand>
</feature>
<feature type="binding site" evidence="1">
    <location>
        <position position="68"/>
    </location>
    <ligand>
        <name>Mg(2+)</name>
        <dbReference type="ChEBI" id="CHEBI:18420"/>
    </ligand>
</feature>
<feature type="binding site" evidence="1">
    <location>
        <begin position="93"/>
        <end position="96"/>
    </location>
    <ligand>
        <name>GTP</name>
        <dbReference type="ChEBI" id="CHEBI:37565"/>
    </ligand>
</feature>
<feature type="binding site" evidence="1">
    <location>
        <begin position="160"/>
        <end position="163"/>
    </location>
    <ligand>
        <name>GTP</name>
        <dbReference type="ChEBI" id="CHEBI:37565"/>
    </ligand>
</feature>
<feature type="binding site" evidence="1">
    <location>
        <begin position="194"/>
        <end position="196"/>
    </location>
    <ligand>
        <name>GTP</name>
        <dbReference type="ChEBI" id="CHEBI:37565"/>
    </ligand>
</feature>
<sequence length="214" mass="23506">MTRDSSLSGVFSRNWIFIRGVPAIRFLPPEGPPEIAFAGRSNVGKSSLINALVQQKGLARTSNTPGRTQELNYFIPDGFSGQRGDLPPFAVVDMPGYGFAAAPKNLVDAWTNLIFSYLRGRSTLKRVYLLIDSRHGIKNNDEDVLALLDKAAVSYQIVLTKSDKIKSNALEKLIMITQTKLLKHPAAYPEILATSSEKAYGLEELRAAILQTIA</sequence>
<proteinExistence type="inferred from homology"/>